<accession>K4REQ6</accession>
<accession>Q2VCE9</accession>
<proteinExistence type="evidence at protein level"/>
<dbReference type="EMBL" id="DQ248961">
    <property type="protein sequence ID" value="ABB90841.1"/>
    <property type="molecule type" value="Genomic_DNA"/>
</dbReference>
<dbReference type="EMBL" id="HE971709">
    <property type="protein sequence ID" value="CCK31524.1"/>
    <property type="molecule type" value="Genomic_DNA"/>
</dbReference>
<dbReference type="RefSeq" id="WP_015661853.1">
    <property type="nucleotide sequence ID" value="NC_020504.1"/>
</dbReference>
<dbReference type="SMR" id="K4REQ6"/>
<dbReference type="STRING" id="1214101.BN159_7145"/>
<dbReference type="KEGG" id="sdv:BN159_7145"/>
<dbReference type="PATRIC" id="fig|1214101.3.peg.7237"/>
<dbReference type="eggNOG" id="COG3201">
    <property type="taxonomic scope" value="Bacteria"/>
</dbReference>
<dbReference type="HOGENOM" id="CLU_076589_0_0_11"/>
<dbReference type="OrthoDB" id="9791248at2"/>
<dbReference type="Proteomes" id="UP000008043">
    <property type="component" value="Chromosome"/>
</dbReference>
<dbReference type="GO" id="GO:0005886">
    <property type="term" value="C:plasma membrane"/>
    <property type="evidence" value="ECO:0007669"/>
    <property type="project" value="UniProtKB-SubCell"/>
</dbReference>
<dbReference type="GO" id="GO:0034257">
    <property type="term" value="F:nicotinamide riboside transmembrane transporter activity"/>
    <property type="evidence" value="ECO:0007669"/>
    <property type="project" value="InterPro"/>
</dbReference>
<dbReference type="InterPro" id="IPR006419">
    <property type="entry name" value="NMN_transpt_PnuC"/>
</dbReference>
<dbReference type="NCBIfam" id="TIGR01528">
    <property type="entry name" value="NMN_trans_PnuC"/>
    <property type="match status" value="1"/>
</dbReference>
<dbReference type="PANTHER" id="PTHR36122">
    <property type="entry name" value="NICOTINAMIDE RIBOSIDE TRANSPORTER PNUC"/>
    <property type="match status" value="1"/>
</dbReference>
<dbReference type="PANTHER" id="PTHR36122:SF2">
    <property type="entry name" value="NICOTINAMIDE RIBOSIDE TRANSPORTER PNUC"/>
    <property type="match status" value="1"/>
</dbReference>
<dbReference type="Pfam" id="PF04973">
    <property type="entry name" value="NMN_transporter"/>
    <property type="match status" value="1"/>
</dbReference>
<evidence type="ECO:0000255" key="1"/>
<evidence type="ECO:0000269" key="2">
    <source>
    </source>
</evidence>
<evidence type="ECO:0000269" key="3">
    <source>
    </source>
</evidence>
<evidence type="ECO:0000269" key="4">
    <source>
    </source>
</evidence>
<evidence type="ECO:0000303" key="5">
    <source>
    </source>
</evidence>
<evidence type="ECO:0000305" key="6"/>
<evidence type="ECO:0000312" key="7">
    <source>
        <dbReference type="EMBL" id="CCK31524.1"/>
    </source>
</evidence>
<protein>
    <recommendedName>
        <fullName evidence="6">Riboflavin/roseoflavin transporter RibM</fullName>
    </recommendedName>
</protein>
<gene>
    <name evidence="5" type="primary">ribM</name>
    <name evidence="7" type="ORF">BN159_7145</name>
</gene>
<keyword id="KW-1003">Cell membrane</keyword>
<keyword id="KW-0472">Membrane</keyword>
<keyword id="KW-1185">Reference proteome</keyword>
<keyword id="KW-0812">Transmembrane</keyword>
<keyword id="KW-1133">Transmembrane helix</keyword>
<keyword id="KW-0813">Transport</keyword>
<sequence>MNWLNSEAFVLFDQHIIWSDMVGNILGLITLALGFRRSLWTWPVQFLSGLVLFGAFYGHLTGSAGKQAVVMAVALYGWYQWNRGTDKAADGKVSVRFATWAERGAMIAAAAVGTVAVALLFKAYPSLSWDPWPDAYIFVGTIVAMYAQARGMVEFWFAWLLVDLVGVPLNFANGYAFSGFVYVIYGALVLWGMRDWWLRSRRDSRPVLEGAPA</sequence>
<feature type="chain" id="PRO_0000443722" description="Riboflavin/roseoflavin transporter RibM">
    <location>
        <begin position="1"/>
        <end position="213"/>
    </location>
</feature>
<feature type="transmembrane region" description="Helical" evidence="1">
    <location>
        <begin position="15"/>
        <end position="35"/>
    </location>
</feature>
<feature type="transmembrane region" description="Helical" evidence="1">
    <location>
        <begin position="38"/>
        <end position="58"/>
    </location>
</feature>
<feature type="transmembrane region" description="Helical" evidence="1">
    <location>
        <begin position="107"/>
        <end position="129"/>
    </location>
</feature>
<feature type="transmembrane region" description="Helical" evidence="1">
    <location>
        <begin position="136"/>
        <end position="158"/>
    </location>
</feature>
<feature type="transmembrane region" description="Helical" evidence="1">
    <location>
        <begin position="171"/>
        <end position="193"/>
    </location>
</feature>
<organism>
    <name type="scientific">Streptomyces davaonensis (strain DSM 101723 / JCM 4913 / KCC S-0913 / 768)</name>
    <dbReference type="NCBI Taxonomy" id="1214101"/>
    <lineage>
        <taxon>Bacteria</taxon>
        <taxon>Bacillati</taxon>
        <taxon>Actinomycetota</taxon>
        <taxon>Actinomycetes</taxon>
        <taxon>Kitasatosporales</taxon>
        <taxon>Streptomycetaceae</taxon>
        <taxon>Streptomyces</taxon>
    </lineage>
</organism>
<name>RIBM_STRDJ</name>
<reference key="1">
    <citation type="journal article" date="2007" name="Arch. Microbiol.">
        <title>Identification and characterization of two Streptomyces davawensis riboflavin biosynthesis gene clusters.</title>
        <authorList>
            <person name="Grill S."/>
            <person name="Yamaguchi H."/>
            <person name="Wagner H."/>
            <person name="Zwahlen L."/>
            <person name="Kusch U."/>
            <person name="Mack M."/>
        </authorList>
    </citation>
    <scope>NUCLEOTIDE SEQUENCE [GENOMIC DNA]</scope>
    <scope>FUNCTION</scope>
    <source>
        <strain>DSM 101723 / JCM 4913 / KCC S-0913 / 768</strain>
    </source>
</reference>
<reference key="2">
    <citation type="journal article" date="2012" name="J. Bacteriol.">
        <title>Genome sequence of the bacterium Streptomyces davawensis JCM 4913 and heterologous production of the unique antibiotic roseoflavin.</title>
        <authorList>
            <person name="Jankowitsch F."/>
            <person name="Schwarz J."/>
            <person name="Ruckert C."/>
            <person name="Gust B."/>
            <person name="Szczepanowski R."/>
            <person name="Blom J."/>
            <person name="Pelzer S."/>
            <person name="Kalinowski J."/>
            <person name="Mack M."/>
        </authorList>
    </citation>
    <scope>NUCLEOTIDE SEQUENCE [LARGE SCALE GENOMIC DNA]</scope>
    <source>
        <strain>DSM 101723 / JCM 4913 / KCC S-0913 / 768</strain>
    </source>
</reference>
<reference key="3">
    <citation type="journal article" date="2011" name="BMC Biotechnol.">
        <title>RibM from Streptomyces davawensis is a riboflavin/roseoflavin transporter and may be useful for the optimization of riboflavin production strains.</title>
        <authorList>
            <person name="Hemberger S."/>
            <person name="Pedrolli D.B."/>
            <person name="Stolz J."/>
            <person name="Vogl C."/>
            <person name="Lehmann M."/>
            <person name="Mack M."/>
        </authorList>
    </citation>
    <scope>FUNCTION</scope>
    <scope>SUBCELLULAR LOCATION</scope>
    <scope>BIOTECHNOLOGY</scope>
</reference>
<reference key="4">
    <citation type="journal article" date="2017" name="PLoS Negl. Trop. Dis.">
        <title>The superfamily keeps growing: Identification in trypanosomatids of RibJ, the first riboflavin transporter family in protists.</title>
        <authorList>
            <person name="Balcazar D.E."/>
            <person name="Vanrell M.C."/>
            <person name="Romano P.S."/>
            <person name="Pereira C.A."/>
            <person name="Goldbaum F.A."/>
            <person name="Bonomi H.R."/>
            <person name="Carrillo C."/>
        </authorList>
    </citation>
    <scope>FUNCTION</scope>
</reference>
<comment type="function">
    <text evidence="2 3 4">Transports riboflavin and roseoflavin (PubMed:17541777, PubMed:22136195, PubMed:28406895). Can also transport FMN and FAD (PubMed:28406895). May confer roseoflavin resistance to S.davawensis, which naturally produces this antibiotic during stationary growth phase (PubMed:22136195).</text>
</comment>
<comment type="subcellular location">
    <subcellularLocation>
        <location evidence="3">Cell membrane</location>
        <topology evidence="1">Multi-pass membrane protein</topology>
    </subcellularLocation>
</comment>
<comment type="biotechnology">
    <text evidence="3">Introduction of ribM into a high performance B.subtilis riboflavin production strain may improve riboflavin production process.</text>
</comment>
<comment type="similarity">
    <text evidence="6">Belongs to the nicotinamide ribonucleoside (NR) uptake permease (TC 4.B.1) family.</text>
</comment>